<feature type="chain" id="PRO_0000340083" description="Chromosome transmission fidelity protein 18 homolog">
    <location>
        <begin position="1"/>
        <end position="1000"/>
    </location>
</feature>
<feature type="region of interest" description="Disordered" evidence="3">
    <location>
        <begin position="53"/>
        <end position="89"/>
    </location>
</feature>
<feature type="region of interest" description="Disordered" evidence="3">
    <location>
        <begin position="130"/>
        <end position="159"/>
    </location>
</feature>
<feature type="region of interest" description="Disordered" evidence="3">
    <location>
        <begin position="272"/>
        <end position="301"/>
    </location>
</feature>
<feature type="region of interest" description="Disordered" evidence="3">
    <location>
        <begin position="888"/>
        <end position="916"/>
    </location>
</feature>
<feature type="compositionally biased region" description="Polar residues" evidence="3">
    <location>
        <begin position="60"/>
        <end position="70"/>
    </location>
</feature>
<feature type="compositionally biased region" description="Acidic residues" evidence="3">
    <location>
        <begin position="272"/>
        <end position="295"/>
    </location>
</feature>
<feature type="compositionally biased region" description="Polar residues" evidence="3">
    <location>
        <begin position="888"/>
        <end position="898"/>
    </location>
</feature>
<feature type="binding site" evidence="2">
    <location>
        <begin position="396"/>
        <end position="403"/>
    </location>
    <ligand>
        <name>ATP</name>
        <dbReference type="ChEBI" id="CHEBI:30616"/>
    </ligand>
</feature>
<keyword id="KW-0067">ATP-binding</keyword>
<keyword id="KW-0131">Cell cycle</keyword>
<keyword id="KW-0235">DNA replication</keyword>
<keyword id="KW-0238">DNA-binding</keyword>
<keyword id="KW-0547">Nucleotide-binding</keyword>
<keyword id="KW-0539">Nucleus</keyword>
<keyword id="KW-1185">Reference proteome</keyword>
<name>CTF18_XENLA</name>
<organism>
    <name type="scientific">Xenopus laevis</name>
    <name type="common">African clawed frog</name>
    <dbReference type="NCBI Taxonomy" id="8355"/>
    <lineage>
        <taxon>Eukaryota</taxon>
        <taxon>Metazoa</taxon>
        <taxon>Chordata</taxon>
        <taxon>Craniata</taxon>
        <taxon>Vertebrata</taxon>
        <taxon>Euteleostomi</taxon>
        <taxon>Amphibia</taxon>
        <taxon>Batrachia</taxon>
        <taxon>Anura</taxon>
        <taxon>Pipoidea</taxon>
        <taxon>Pipidae</taxon>
        <taxon>Xenopodinae</taxon>
        <taxon>Xenopus</taxon>
        <taxon>Xenopus</taxon>
    </lineage>
</organism>
<accession>Q6NU40</accession>
<proteinExistence type="evidence at transcript level"/>
<dbReference type="EMBL" id="BC068761">
    <property type="protein sequence ID" value="AAH68761.1"/>
    <property type="molecule type" value="mRNA"/>
</dbReference>
<dbReference type="RefSeq" id="NP_001084621.1">
    <property type="nucleotide sequence ID" value="NM_001091152.1"/>
</dbReference>
<dbReference type="SMR" id="Q6NU40"/>
<dbReference type="DNASU" id="414577"/>
<dbReference type="GeneID" id="414577"/>
<dbReference type="KEGG" id="xla:414577"/>
<dbReference type="AGR" id="Xenbase:XB-GENE-987606"/>
<dbReference type="CTD" id="414577"/>
<dbReference type="Xenbase" id="XB-GENE-987606">
    <property type="gene designation" value="chtf18.L"/>
</dbReference>
<dbReference type="OrthoDB" id="2195431at2759"/>
<dbReference type="Proteomes" id="UP000186698">
    <property type="component" value="Chromosome 9_10L"/>
</dbReference>
<dbReference type="Bgee" id="414577">
    <property type="expression patterns" value="Expressed in blastula and 16 other cell types or tissues"/>
</dbReference>
<dbReference type="GO" id="GO:0005663">
    <property type="term" value="C:DNA replication factor C complex"/>
    <property type="evidence" value="ECO:0007669"/>
    <property type="project" value="InterPro"/>
</dbReference>
<dbReference type="GO" id="GO:0005634">
    <property type="term" value="C:nucleus"/>
    <property type="evidence" value="ECO:0007669"/>
    <property type="project" value="UniProtKB-SubCell"/>
</dbReference>
<dbReference type="GO" id="GO:0005524">
    <property type="term" value="F:ATP binding"/>
    <property type="evidence" value="ECO:0007669"/>
    <property type="project" value="UniProtKB-KW"/>
</dbReference>
<dbReference type="GO" id="GO:0016887">
    <property type="term" value="F:ATP hydrolysis activity"/>
    <property type="evidence" value="ECO:0007669"/>
    <property type="project" value="InterPro"/>
</dbReference>
<dbReference type="GO" id="GO:0003677">
    <property type="term" value="F:DNA binding"/>
    <property type="evidence" value="ECO:0007669"/>
    <property type="project" value="UniProtKB-KW"/>
</dbReference>
<dbReference type="GO" id="GO:0003689">
    <property type="term" value="F:DNA clamp loader activity"/>
    <property type="evidence" value="ECO:0007669"/>
    <property type="project" value="InterPro"/>
</dbReference>
<dbReference type="GO" id="GO:0006260">
    <property type="term" value="P:DNA replication"/>
    <property type="evidence" value="ECO:0007669"/>
    <property type="project" value="UniProtKB-KW"/>
</dbReference>
<dbReference type="CDD" id="cd00009">
    <property type="entry name" value="AAA"/>
    <property type="match status" value="1"/>
</dbReference>
<dbReference type="CDD" id="cd18140">
    <property type="entry name" value="HLD_clamp_RFC"/>
    <property type="match status" value="1"/>
</dbReference>
<dbReference type="FunFam" id="3.40.50.300:FF:001083">
    <property type="entry name" value="Chromosome transmission fidelity factor 18"/>
    <property type="match status" value="1"/>
</dbReference>
<dbReference type="FunFam" id="1.10.8.60:FF:000074">
    <property type="entry name" value="Chromosome transmission fidelity protein 18"/>
    <property type="match status" value="1"/>
</dbReference>
<dbReference type="Gene3D" id="1.10.8.60">
    <property type="match status" value="1"/>
</dbReference>
<dbReference type="Gene3D" id="3.40.50.300">
    <property type="entry name" value="P-loop containing nucleotide triphosphate hydrolases"/>
    <property type="match status" value="1"/>
</dbReference>
<dbReference type="InterPro" id="IPR003593">
    <property type="entry name" value="AAA+_ATPase"/>
</dbReference>
<dbReference type="InterPro" id="IPR003959">
    <property type="entry name" value="ATPase_AAA_core"/>
</dbReference>
<dbReference type="InterPro" id="IPR053016">
    <property type="entry name" value="CTF18-RFC_complex"/>
</dbReference>
<dbReference type="InterPro" id="IPR013725">
    <property type="entry name" value="DNA_replication_fac_RFC1_C"/>
</dbReference>
<dbReference type="InterPro" id="IPR027417">
    <property type="entry name" value="P-loop_NTPase"/>
</dbReference>
<dbReference type="InterPro" id="IPR047854">
    <property type="entry name" value="RFC_lid"/>
</dbReference>
<dbReference type="PANTHER" id="PTHR46765">
    <property type="entry name" value="P-LOOP CONTAINING NUCLEOSIDE TRIPHOSPHATE HYDROLASES SUPERFAMILY PROTEIN"/>
    <property type="match status" value="1"/>
</dbReference>
<dbReference type="PANTHER" id="PTHR46765:SF1">
    <property type="entry name" value="P-LOOP CONTAINING NUCLEOSIDE TRIPHOSPHATE HYDROLASES SUPERFAMILY PROTEIN"/>
    <property type="match status" value="1"/>
</dbReference>
<dbReference type="Pfam" id="PF00004">
    <property type="entry name" value="AAA"/>
    <property type="match status" value="1"/>
</dbReference>
<dbReference type="Pfam" id="PF08519">
    <property type="entry name" value="RFC1"/>
    <property type="match status" value="1"/>
</dbReference>
<dbReference type="SMART" id="SM00382">
    <property type="entry name" value="AAA"/>
    <property type="match status" value="1"/>
</dbReference>
<dbReference type="SUPFAM" id="SSF52540">
    <property type="entry name" value="P-loop containing nucleoside triphosphate hydrolases"/>
    <property type="match status" value="1"/>
</dbReference>
<protein>
    <recommendedName>
        <fullName>Chromosome transmission fidelity protein 18 homolog</fullName>
    </recommendedName>
</protein>
<reference key="1">
    <citation type="submission" date="2004-04" db="EMBL/GenBank/DDBJ databases">
        <authorList>
            <consortium name="NIH - Xenopus Gene Collection (XGC) project"/>
        </authorList>
    </citation>
    <scope>NUCLEOTIDE SEQUENCE [LARGE SCALE MRNA]</scope>
    <source>
        <tissue>Embryo</tissue>
    </source>
</reference>
<sequence>MEEYDLYGVEDDFESQFASELEVLAELEDDVSSRPGPQRSQLRTKLSFEEAISAGDPIRSNANSKPTGDSNGEALACIDTSKSKKRDASCIDFEEDEFSDSIYEPPITPKHKRARIEAVKKLDFGRDEYAGNSTALSDDITPPPSPNHSPKKNERDSKFSSCEAFEVSDMAPLQVTPTESEQKRVLKRPPVLEDYINVTSTDGSRVYMALKEDNDGAQQKQGNLKWNSGQQLHLLGVPFSYLKEQVNDEHRRKVLEESQRLTEMLNSQINEEFGENDSEILENDDNAGEEDDEDEPSSHSLWVDRFTPRHYTELLSDDYTNRCLLKWLKLWDTVVFGKERVVRKPKAIVDPRANHFKNQKEQQSKFKTKAQITEEILEAELDHHNRPKNKVSLLCGPPGLGKTTLAHVIARHAGYNVVEMNASDDRSPEAFRTRIEAATQMKSVLGVDERPNCLIIDEIDGAPTVSINMLLSLVNRKDAKEAEGGTEATTGKKKKKEGGLLLRPIICICNDQYVPSLRQLRQQAFMLNFPQTMPSRLVQRLYEIAVKQGMKADTGALMALCEKTENDIRSCINTLQFLHGRGKKELNMRSVQTMRIGLKDQNKGLFSVWQEIFQLPKIQRKRIGQEVATNDLHLLLGSENDSLGMLAKPPLNAVAQRFHHILHLSTSTGEYEKLTMGLYDNFLNMKVKESNFSTVCLALDWLEFTDIVNSTIMHGQNFQLMRYLPFLPVAFHLLFAASNVPRIAYPSSHYEAQSKLNQMQNLLNAMVSEISPAIRTRVGPQSLVLDALCLLLDVLSPKLRPVNTQLFSTKEKQQLAELINTMLAYNLTYHQERTMEGQYVYKLDPNVEDVCRFPDLPVRKPLTYQTKQLIAREIELERMRRTEAFQQARNAGRDNTTAAAAVKTADPKGAKSAAKPAALNHEQRLENIMKKATFEEKPEKDFFGRQIVKKVAAPVTASANQEESVERRIGKAVGNSDVWFRFNEGVSNAVRRNIYIKDLL</sequence>
<gene>
    <name type="primary">chtf18</name>
    <name type="synonym">ctf18</name>
</gene>
<comment type="function">
    <text evidence="1">Chromosome cohesion factor involved in sister chromatid cohesion and fidelity of chromosome transmission. Component of one of the cell nuclear antigen loader complexes, CTF18-replication factor C (CTF18-RFC), which consists of ctf18, ctf8, dcc1, rfc2, rfc3, rfc4 and rfc5. The CTF18-RFC complex binds to single-stranded and primed DNAs and has weak ATPase activity that is stimulated by the presence of primed DNA, replication protein A (RPA) and by proliferating cell nuclear antigen (pcna). The CTF18-RFC complex catalyzes the ATP-dependent loading of pcna onto primed and gapped DNA (By similarity).</text>
</comment>
<comment type="subunit">
    <text evidence="1">Component of the CTF18-RFC complex, which consists of ctf18, ctf8, dcc1, rfc2, rfc3, rfc4 and rfc5. The CTF18-RFC complex associates with pcna (By similarity).</text>
</comment>
<comment type="subcellular location">
    <subcellularLocation>
        <location>Nucleus</location>
    </subcellularLocation>
    <text evidence="1">Associates with chromatin during S phase.</text>
</comment>
<comment type="similarity">
    <text evidence="4">Belongs to the activator 1 small subunits family. CTF18 subfamily.</text>
</comment>
<evidence type="ECO:0000250" key="1"/>
<evidence type="ECO:0000255" key="2"/>
<evidence type="ECO:0000256" key="3">
    <source>
        <dbReference type="SAM" id="MobiDB-lite"/>
    </source>
</evidence>
<evidence type="ECO:0000305" key="4"/>